<organism>
    <name type="scientific">Mus musculus</name>
    <name type="common">Mouse</name>
    <dbReference type="NCBI Taxonomy" id="10090"/>
    <lineage>
        <taxon>Eukaryota</taxon>
        <taxon>Metazoa</taxon>
        <taxon>Chordata</taxon>
        <taxon>Craniata</taxon>
        <taxon>Vertebrata</taxon>
        <taxon>Euteleostomi</taxon>
        <taxon>Mammalia</taxon>
        <taxon>Eutheria</taxon>
        <taxon>Euarchontoglires</taxon>
        <taxon>Glires</taxon>
        <taxon>Rodentia</taxon>
        <taxon>Myomorpha</taxon>
        <taxon>Muroidea</taxon>
        <taxon>Muridae</taxon>
        <taxon>Murinae</taxon>
        <taxon>Mus</taxon>
        <taxon>Mus</taxon>
    </lineage>
</organism>
<evidence type="ECO:0000255" key="1"/>
<evidence type="ECO:0000255" key="2">
    <source>
        <dbReference type="PROSITE-ProRule" id="PRU00098"/>
    </source>
</evidence>
<evidence type="ECO:0000269" key="3">
    <source>
    </source>
</evidence>
<evidence type="ECO:0000305" key="4"/>
<gene>
    <name type="primary">Adgrf4</name>
    <name type="synonym">Gpr115</name>
</gene>
<feature type="signal peptide" evidence="1">
    <location>
        <begin position="1"/>
        <end position="19"/>
    </location>
</feature>
<feature type="chain" id="PRO_0000012895" description="Adhesion G protein-coupled receptor F4">
    <location>
        <begin position="20"/>
        <end position="698"/>
    </location>
</feature>
<feature type="topological domain" description="Extracellular" evidence="4">
    <location>
        <begin position="20"/>
        <end position="409"/>
    </location>
</feature>
<feature type="transmembrane region" description="Helical; Name=1" evidence="1">
    <location>
        <begin position="410"/>
        <end position="430"/>
    </location>
</feature>
<feature type="topological domain" description="Cytoplasmic" evidence="4">
    <location>
        <begin position="431"/>
        <end position="444"/>
    </location>
</feature>
<feature type="transmembrane region" description="Helical; Name=2" evidence="1">
    <location>
        <begin position="445"/>
        <end position="465"/>
    </location>
</feature>
<feature type="topological domain" description="Extracellular" evidence="4">
    <location>
        <begin position="466"/>
        <end position="486"/>
    </location>
</feature>
<feature type="transmembrane region" description="Helical; Name=3" evidence="1">
    <location>
        <begin position="487"/>
        <end position="507"/>
    </location>
</feature>
<feature type="topological domain" description="Cytoplasmic" evidence="4">
    <location>
        <begin position="508"/>
        <end position="518"/>
    </location>
</feature>
<feature type="transmembrane region" description="Helical; Name=4" evidence="1">
    <location>
        <begin position="519"/>
        <end position="539"/>
    </location>
</feature>
<feature type="topological domain" description="Extracellular" evidence="4">
    <location>
        <begin position="540"/>
        <end position="566"/>
    </location>
</feature>
<feature type="transmembrane region" description="Helical; Name=5" evidence="1">
    <location>
        <begin position="567"/>
        <end position="587"/>
    </location>
</feature>
<feature type="topological domain" description="Cytoplasmic" evidence="4">
    <location>
        <begin position="588"/>
        <end position="611"/>
    </location>
</feature>
<feature type="transmembrane region" description="Helical; Name=6" evidence="1">
    <location>
        <begin position="612"/>
        <end position="632"/>
    </location>
</feature>
<feature type="topological domain" description="Extracellular" evidence="4">
    <location>
        <begin position="633"/>
        <end position="635"/>
    </location>
</feature>
<feature type="transmembrane region" description="Helical; Name=7" evidence="1">
    <location>
        <begin position="636"/>
        <end position="656"/>
    </location>
</feature>
<feature type="topological domain" description="Cytoplasmic" evidence="4">
    <location>
        <begin position="657"/>
        <end position="698"/>
    </location>
</feature>
<feature type="domain" description="GAIN-B" evidence="2">
    <location>
        <begin position="250"/>
        <end position="401"/>
    </location>
</feature>
<feature type="region of interest" description="GPS" evidence="2">
    <location>
        <begin position="353"/>
        <end position="401"/>
    </location>
</feature>
<feature type="glycosylation site" description="N-linked (GlcNAc...) asparagine" evidence="1">
    <location>
        <position position="61"/>
    </location>
</feature>
<feature type="glycosylation site" description="N-linked (GlcNAc...) asparagine" evidence="1">
    <location>
        <position position="168"/>
    </location>
</feature>
<feature type="glycosylation site" description="N-linked (GlcNAc...) asparagine" evidence="1">
    <location>
        <position position="213"/>
    </location>
</feature>
<feature type="glycosylation site" description="N-linked (GlcNAc...) asparagine" evidence="1">
    <location>
        <position position="268"/>
    </location>
</feature>
<feature type="glycosylation site" description="N-linked (GlcNAc...) asparagine" evidence="1">
    <location>
        <position position="290"/>
    </location>
</feature>
<feature type="glycosylation site" description="N-linked (GlcNAc...) asparagine" evidence="1">
    <location>
        <position position="344"/>
    </location>
</feature>
<feature type="glycosylation site" description="N-linked (GlcNAc...) asparagine" evidence="1">
    <location>
        <position position="375"/>
    </location>
</feature>
<feature type="glycosylation site" description="N-linked (GlcNAc...) asparagine" evidence="1">
    <location>
        <position position="466"/>
    </location>
</feature>
<feature type="glycosylation site" description="N-linked (GlcNAc...) asparagine" evidence="1">
    <location>
        <position position="559"/>
    </location>
</feature>
<feature type="disulfide bond" evidence="2">
    <location>
        <begin position="353"/>
        <end position="380"/>
    </location>
</feature>
<feature type="disulfide bond" evidence="2">
    <location>
        <begin position="368"/>
        <end position="382"/>
    </location>
</feature>
<feature type="sequence conflict" description="In Ref. 2; AAH89564." evidence="4" ref="2">
    <original>S</original>
    <variation>P</variation>
    <location>
        <position position="170"/>
    </location>
</feature>
<feature type="sequence conflict" description="In Ref. 2; AAH89564." evidence="4" ref="2">
    <original>R</original>
    <variation>Q</variation>
    <location>
        <position position="311"/>
    </location>
</feature>
<feature type="sequence conflict" description="In Ref. 1; BAB31767." evidence="4" ref="1">
    <original>S</original>
    <variation>N</variation>
    <location>
        <position position="315"/>
    </location>
</feature>
<feature type="sequence conflict" description="In Ref. 2; AAH89564." evidence="4" ref="2">
    <original>A</original>
    <variation>V</variation>
    <location>
        <position position="359"/>
    </location>
</feature>
<feature type="sequence conflict" description="In Ref. 2; AAH89564." evidence="4" ref="2">
    <original>F</original>
    <variation>L</variation>
    <location>
        <position position="489"/>
    </location>
</feature>
<keyword id="KW-1015">Disulfide bond</keyword>
<keyword id="KW-0297">G-protein coupled receptor</keyword>
<keyword id="KW-0325">Glycoprotein</keyword>
<keyword id="KW-0472">Membrane</keyword>
<keyword id="KW-0675">Receptor</keyword>
<keyword id="KW-1185">Reference proteome</keyword>
<keyword id="KW-0732">Signal</keyword>
<keyword id="KW-0807">Transducer</keyword>
<keyword id="KW-0812">Transmembrane</keyword>
<keyword id="KW-1133">Transmembrane helix</keyword>
<name>AGRF4_MOUSE</name>
<protein>
    <recommendedName>
        <fullName>Adhesion G protein-coupled receptor F4</fullName>
    </recommendedName>
    <alternativeName>
        <fullName>G-protein coupled receptor 115</fullName>
    </alternativeName>
</protein>
<sequence length="698" mass="77331">MKPWIAMVCCLVFFLTTECSHSKPKTHRKDEDKFQISLQKHEFRPRQGKCDGLCSSSSSCNQSCPWNFRGEIVFTCNQNKWQKTIETCTSLSVDTLFQRIHPAASLSLASSSVFPMSLIGNAAPVHIGNVFQGIQKYCPEDYVCIVDAVKSSAVTSGNIAFIVELLKNISSNLQTSGIHDNVNWKKMKNYGKVANHILGPTAISNWAFIANKNASSDLLESVNSFAKKLQIQGKSESIVDELFIQTKGSRISHSSSEHSLSLSVPRYNATEDVLVVIEIPRQALQELSFNASQAIVVAFPTLGAILKEVHRPNTSLQKPIDDLILSLVLPEGLNEIILTFDKINKSQSTSSQCVSWDPATGQWDESPCTVMSDINSTVKCRCRHTKAVTSFSILMSSKPVKNTILNHITFIGLSISIFSLVLCLVIEAIVWSRVVVTEISYMRHVCIVNIAVSLLTANVWFIIGSNFSANVQEDHKWCVAVTFLCHFFFLSLFFWMLFKALLIVYGILVVFRRMMKSRMMAIGFAIGYGCPLVIAVITVTVTEPGEGYTRKDACWLNWNQTKALFAFAIPALAIVAVNLLVVLAVAINTQRPLIGSSKSQDMAIVFRISKNVAILTPLLGLTWGFGLTTLLEGVHLVFHIIFALLNAFQGFFILLFGTIMDHKIRDALRMRVSSLKGKSRAAEKVSLSPANGSRILNR</sequence>
<dbReference type="EMBL" id="AK019508">
    <property type="protein sequence ID" value="BAB31767.1"/>
    <property type="molecule type" value="mRNA"/>
</dbReference>
<dbReference type="EMBL" id="BC089564">
    <property type="protein sequence ID" value="AAH89564.1"/>
    <property type="molecule type" value="mRNA"/>
</dbReference>
<dbReference type="CCDS" id="CCDS50113.1"/>
<dbReference type="RefSeq" id="NP_001276428.1">
    <property type="nucleotide sequence ID" value="NM_001289499.1"/>
</dbReference>
<dbReference type="RefSeq" id="NP_001276429.1">
    <property type="nucleotide sequence ID" value="NM_001289500.1"/>
</dbReference>
<dbReference type="RefSeq" id="NP_001276430.1">
    <property type="nucleotide sequence ID" value="NM_001289501.1"/>
</dbReference>
<dbReference type="RefSeq" id="NP_084343.1">
    <property type="nucleotide sequence ID" value="NM_030067.2"/>
</dbReference>
<dbReference type="RefSeq" id="XP_017173214.1">
    <property type="nucleotide sequence ID" value="XM_017317725.1"/>
</dbReference>
<dbReference type="SMR" id="Q9D2L6"/>
<dbReference type="STRING" id="10090.ENSMUSP00000024711"/>
<dbReference type="MEROPS" id="P02.034"/>
<dbReference type="GlyCosmos" id="Q9D2L6">
    <property type="glycosylation" value="9 sites, No reported glycans"/>
</dbReference>
<dbReference type="GlyGen" id="Q9D2L6">
    <property type="glycosylation" value="9 sites, 1 N-linked glycan (1 site)"/>
</dbReference>
<dbReference type="iPTMnet" id="Q9D2L6"/>
<dbReference type="PhosphoSitePlus" id="Q9D2L6"/>
<dbReference type="PaxDb" id="10090-ENSMUSP00000024711"/>
<dbReference type="DNASU" id="78249"/>
<dbReference type="GeneID" id="78249"/>
<dbReference type="KEGG" id="mmu:78249"/>
<dbReference type="UCSC" id="uc008cor.2">
    <property type="organism name" value="mouse"/>
</dbReference>
<dbReference type="AGR" id="MGI:1925499"/>
<dbReference type="CTD" id="221393"/>
<dbReference type="MGI" id="MGI:1925499">
    <property type="gene designation" value="Adgrf4"/>
</dbReference>
<dbReference type="eggNOG" id="KOG4193">
    <property type="taxonomic scope" value="Eukaryota"/>
</dbReference>
<dbReference type="InParanoid" id="Q9D2L6"/>
<dbReference type="OrthoDB" id="10040049at2759"/>
<dbReference type="PhylomeDB" id="Q9D2L6"/>
<dbReference type="TreeFam" id="TF316380"/>
<dbReference type="BioGRID-ORCS" id="78249">
    <property type="hits" value="1 hit in 77 CRISPR screens"/>
</dbReference>
<dbReference type="PRO" id="PR:Q9D2L6"/>
<dbReference type="Proteomes" id="UP000000589">
    <property type="component" value="Unplaced"/>
</dbReference>
<dbReference type="RNAct" id="Q9D2L6">
    <property type="molecule type" value="protein"/>
</dbReference>
<dbReference type="GO" id="GO:0016020">
    <property type="term" value="C:membrane"/>
    <property type="evidence" value="ECO:0007669"/>
    <property type="project" value="UniProtKB-SubCell"/>
</dbReference>
<dbReference type="GO" id="GO:0004930">
    <property type="term" value="F:G protein-coupled receptor activity"/>
    <property type="evidence" value="ECO:0007669"/>
    <property type="project" value="UniProtKB-KW"/>
</dbReference>
<dbReference type="GO" id="GO:0007166">
    <property type="term" value="P:cell surface receptor signaling pathway"/>
    <property type="evidence" value="ECO:0007669"/>
    <property type="project" value="InterPro"/>
</dbReference>
<dbReference type="GO" id="GO:0048821">
    <property type="term" value="P:erythrocyte development"/>
    <property type="evidence" value="ECO:0000316"/>
    <property type="project" value="MGI"/>
</dbReference>
<dbReference type="GO" id="GO:0003094">
    <property type="term" value="P:glomerular filtration"/>
    <property type="evidence" value="ECO:0000316"/>
    <property type="project" value="MGI"/>
</dbReference>
<dbReference type="GO" id="GO:0061626">
    <property type="term" value="P:pharyngeal arch artery morphogenesis"/>
    <property type="evidence" value="ECO:0000316"/>
    <property type="project" value="MGI"/>
</dbReference>
<dbReference type="FunFam" id="2.60.220.50:FF:000015">
    <property type="entry name" value="Adhesion G protein-coupled receptor F4"/>
    <property type="match status" value="1"/>
</dbReference>
<dbReference type="FunFam" id="1.20.1070.10:FF:000058">
    <property type="entry name" value="Adhesion G protein-coupled receptor F5"/>
    <property type="match status" value="1"/>
</dbReference>
<dbReference type="Gene3D" id="2.60.220.50">
    <property type="match status" value="1"/>
</dbReference>
<dbReference type="Gene3D" id="1.20.1070.10">
    <property type="entry name" value="Rhodopsin 7-helix transmembrane proteins"/>
    <property type="match status" value="1"/>
</dbReference>
<dbReference type="InterPro" id="IPR051587">
    <property type="entry name" value="Adhesion_GPCR"/>
</dbReference>
<dbReference type="InterPro" id="IPR057244">
    <property type="entry name" value="GAIN_B"/>
</dbReference>
<dbReference type="InterPro" id="IPR046338">
    <property type="entry name" value="GAIN_dom_sf"/>
</dbReference>
<dbReference type="InterPro" id="IPR017981">
    <property type="entry name" value="GPCR_2-like_7TM"/>
</dbReference>
<dbReference type="InterPro" id="IPR008078">
    <property type="entry name" value="GPCR_2_Ig-hepta-like_rcpt"/>
</dbReference>
<dbReference type="InterPro" id="IPR000832">
    <property type="entry name" value="GPCR_2_secretin-like"/>
</dbReference>
<dbReference type="InterPro" id="IPR000203">
    <property type="entry name" value="GPS"/>
</dbReference>
<dbReference type="PANTHER" id="PTHR45813:SF1">
    <property type="entry name" value="ADHESION G PROTEIN-COUPLED RECEPTOR F4"/>
    <property type="match status" value="1"/>
</dbReference>
<dbReference type="PANTHER" id="PTHR45813">
    <property type="entry name" value="IG-LIKE DOMAIN-CONTAINING PROTEIN"/>
    <property type="match status" value="1"/>
</dbReference>
<dbReference type="Pfam" id="PF00002">
    <property type="entry name" value="7tm_2"/>
    <property type="match status" value="1"/>
</dbReference>
<dbReference type="PRINTS" id="PR00249">
    <property type="entry name" value="GPCRSECRETIN"/>
</dbReference>
<dbReference type="PRINTS" id="PR01695">
    <property type="entry name" value="IGHEPTARCPTR"/>
</dbReference>
<dbReference type="SMART" id="SM00303">
    <property type="entry name" value="GPS"/>
    <property type="match status" value="1"/>
</dbReference>
<dbReference type="PROSITE" id="PS50261">
    <property type="entry name" value="G_PROTEIN_RECEP_F2_4"/>
    <property type="match status" value="1"/>
</dbReference>
<dbReference type="PROSITE" id="PS50221">
    <property type="entry name" value="GAIN_B"/>
    <property type="match status" value="1"/>
</dbReference>
<accession>Q9D2L6</accession>
<accession>Q5FW81</accession>
<proteinExistence type="evidence at transcript level"/>
<comment type="function">
    <text>Orphan receptor.</text>
</comment>
<comment type="subcellular location">
    <subcellularLocation>
        <location evidence="1">Membrane</location>
        <topology evidence="1">Multi-pass membrane protein</topology>
    </subcellularLocation>
</comment>
<comment type="tissue specificity">
    <text evidence="3">Expressed in squamous epithelia.</text>
</comment>
<comment type="developmental stage">
    <text evidence="3">Expressed during embryonic development in the skin starting at embryonic day 12 with the formation of the basal layer of the skin.</text>
</comment>
<comment type="disruption phenotype">
    <text evidence="3">No visible phenotype.</text>
</comment>
<comment type="miscellaneous">
    <text evidence="3">Most adhesion GPCRs undergo autoproteolysis at the GPS region of the GAIN-B domain. ADGRF2 is not autoproteolyzed at the GPS region because of the lack of a consensus catalytic triad sequence within GAIN-B domain.</text>
</comment>
<comment type="similarity">
    <text evidence="4">Belongs to the G-protein coupled receptor 2 family. Adhesion G-protein coupled receptor (ADGR) subfamily.</text>
</comment>
<reference key="1">
    <citation type="journal article" date="2005" name="Science">
        <title>The transcriptional landscape of the mammalian genome.</title>
        <authorList>
            <person name="Carninci P."/>
            <person name="Kasukawa T."/>
            <person name="Katayama S."/>
            <person name="Gough J."/>
            <person name="Frith M.C."/>
            <person name="Maeda N."/>
            <person name="Oyama R."/>
            <person name="Ravasi T."/>
            <person name="Lenhard B."/>
            <person name="Wells C."/>
            <person name="Kodzius R."/>
            <person name="Shimokawa K."/>
            <person name="Bajic V.B."/>
            <person name="Brenner S.E."/>
            <person name="Batalov S."/>
            <person name="Forrest A.R."/>
            <person name="Zavolan M."/>
            <person name="Davis M.J."/>
            <person name="Wilming L.G."/>
            <person name="Aidinis V."/>
            <person name="Allen J.E."/>
            <person name="Ambesi-Impiombato A."/>
            <person name="Apweiler R."/>
            <person name="Aturaliya R.N."/>
            <person name="Bailey T.L."/>
            <person name="Bansal M."/>
            <person name="Baxter L."/>
            <person name="Beisel K.W."/>
            <person name="Bersano T."/>
            <person name="Bono H."/>
            <person name="Chalk A.M."/>
            <person name="Chiu K.P."/>
            <person name="Choudhary V."/>
            <person name="Christoffels A."/>
            <person name="Clutterbuck D.R."/>
            <person name="Crowe M.L."/>
            <person name="Dalla E."/>
            <person name="Dalrymple B.P."/>
            <person name="de Bono B."/>
            <person name="Della Gatta G."/>
            <person name="di Bernardo D."/>
            <person name="Down T."/>
            <person name="Engstrom P."/>
            <person name="Fagiolini M."/>
            <person name="Faulkner G."/>
            <person name="Fletcher C.F."/>
            <person name="Fukushima T."/>
            <person name="Furuno M."/>
            <person name="Futaki S."/>
            <person name="Gariboldi M."/>
            <person name="Georgii-Hemming P."/>
            <person name="Gingeras T.R."/>
            <person name="Gojobori T."/>
            <person name="Green R.E."/>
            <person name="Gustincich S."/>
            <person name="Harbers M."/>
            <person name="Hayashi Y."/>
            <person name="Hensch T.K."/>
            <person name="Hirokawa N."/>
            <person name="Hill D."/>
            <person name="Huminiecki L."/>
            <person name="Iacono M."/>
            <person name="Ikeo K."/>
            <person name="Iwama A."/>
            <person name="Ishikawa T."/>
            <person name="Jakt M."/>
            <person name="Kanapin A."/>
            <person name="Katoh M."/>
            <person name="Kawasawa Y."/>
            <person name="Kelso J."/>
            <person name="Kitamura H."/>
            <person name="Kitano H."/>
            <person name="Kollias G."/>
            <person name="Krishnan S.P."/>
            <person name="Kruger A."/>
            <person name="Kummerfeld S.K."/>
            <person name="Kurochkin I.V."/>
            <person name="Lareau L.F."/>
            <person name="Lazarevic D."/>
            <person name="Lipovich L."/>
            <person name="Liu J."/>
            <person name="Liuni S."/>
            <person name="McWilliam S."/>
            <person name="Madan Babu M."/>
            <person name="Madera M."/>
            <person name="Marchionni L."/>
            <person name="Matsuda H."/>
            <person name="Matsuzawa S."/>
            <person name="Miki H."/>
            <person name="Mignone F."/>
            <person name="Miyake S."/>
            <person name="Morris K."/>
            <person name="Mottagui-Tabar S."/>
            <person name="Mulder N."/>
            <person name="Nakano N."/>
            <person name="Nakauchi H."/>
            <person name="Ng P."/>
            <person name="Nilsson R."/>
            <person name="Nishiguchi S."/>
            <person name="Nishikawa S."/>
            <person name="Nori F."/>
            <person name="Ohara O."/>
            <person name="Okazaki Y."/>
            <person name="Orlando V."/>
            <person name="Pang K.C."/>
            <person name="Pavan W.J."/>
            <person name="Pavesi G."/>
            <person name="Pesole G."/>
            <person name="Petrovsky N."/>
            <person name="Piazza S."/>
            <person name="Reed J."/>
            <person name="Reid J.F."/>
            <person name="Ring B.Z."/>
            <person name="Ringwald M."/>
            <person name="Rost B."/>
            <person name="Ruan Y."/>
            <person name="Salzberg S.L."/>
            <person name="Sandelin A."/>
            <person name="Schneider C."/>
            <person name="Schoenbach C."/>
            <person name="Sekiguchi K."/>
            <person name="Semple C.A."/>
            <person name="Seno S."/>
            <person name="Sessa L."/>
            <person name="Sheng Y."/>
            <person name="Shibata Y."/>
            <person name="Shimada H."/>
            <person name="Shimada K."/>
            <person name="Silva D."/>
            <person name="Sinclair B."/>
            <person name="Sperling S."/>
            <person name="Stupka E."/>
            <person name="Sugiura K."/>
            <person name="Sultana R."/>
            <person name="Takenaka Y."/>
            <person name="Taki K."/>
            <person name="Tammoja K."/>
            <person name="Tan S.L."/>
            <person name="Tang S."/>
            <person name="Taylor M.S."/>
            <person name="Tegner J."/>
            <person name="Teichmann S.A."/>
            <person name="Ueda H.R."/>
            <person name="van Nimwegen E."/>
            <person name="Verardo R."/>
            <person name="Wei C.L."/>
            <person name="Yagi K."/>
            <person name="Yamanishi H."/>
            <person name="Zabarovsky E."/>
            <person name="Zhu S."/>
            <person name="Zimmer A."/>
            <person name="Hide W."/>
            <person name="Bult C."/>
            <person name="Grimmond S.M."/>
            <person name="Teasdale R.D."/>
            <person name="Liu E.T."/>
            <person name="Brusic V."/>
            <person name="Quackenbush J."/>
            <person name="Wahlestedt C."/>
            <person name="Mattick J.S."/>
            <person name="Hume D.A."/>
            <person name="Kai C."/>
            <person name="Sasaki D."/>
            <person name="Tomaru Y."/>
            <person name="Fukuda S."/>
            <person name="Kanamori-Katayama M."/>
            <person name="Suzuki M."/>
            <person name="Aoki J."/>
            <person name="Arakawa T."/>
            <person name="Iida J."/>
            <person name="Imamura K."/>
            <person name="Itoh M."/>
            <person name="Kato T."/>
            <person name="Kawaji H."/>
            <person name="Kawagashira N."/>
            <person name="Kawashima T."/>
            <person name="Kojima M."/>
            <person name="Kondo S."/>
            <person name="Konno H."/>
            <person name="Nakano K."/>
            <person name="Ninomiya N."/>
            <person name="Nishio T."/>
            <person name="Okada M."/>
            <person name="Plessy C."/>
            <person name="Shibata K."/>
            <person name="Shiraki T."/>
            <person name="Suzuki S."/>
            <person name="Tagami M."/>
            <person name="Waki K."/>
            <person name="Watahiki A."/>
            <person name="Okamura-Oho Y."/>
            <person name="Suzuki H."/>
            <person name="Kawai J."/>
            <person name="Hayashizaki Y."/>
        </authorList>
    </citation>
    <scope>NUCLEOTIDE SEQUENCE [LARGE SCALE MRNA]</scope>
    <source>
        <strain>C57BL/6J</strain>
        <tissue>Skin</tissue>
    </source>
</reference>
<reference key="2">
    <citation type="journal article" date="2004" name="Genome Res.">
        <title>The status, quality, and expansion of the NIH full-length cDNA project: the Mammalian Gene Collection (MGC).</title>
        <authorList>
            <consortium name="The MGC Project Team"/>
        </authorList>
    </citation>
    <scope>NUCLEOTIDE SEQUENCE [LARGE SCALE MRNA]</scope>
    <source>
        <tissue>Molar</tissue>
    </source>
</reference>
<reference key="3">
    <citation type="journal article" date="2012" name="Dev. Dyn.">
        <title>Characterization and functional study of a cluster of four highly conserved orphan adhesion-GPCR in mouse.</title>
        <authorList>
            <person name="Promel S."/>
            <person name="Waller-Evans H."/>
            <person name="Dixon J."/>
            <person name="Zahn D."/>
            <person name="Colledge W.H."/>
            <person name="Doran J."/>
            <person name="Carlton M.B."/>
            <person name="Grosse J."/>
            <person name="Schoneberg T."/>
            <person name="Russ A.P."/>
            <person name="Langenhan T."/>
        </authorList>
    </citation>
    <scope>TISSUE SPECIFICITY</scope>
    <scope>DEVELOPMENTAL STAGE</scope>
    <scope>DISRUPTION PHENOTYPE</scope>
</reference>